<comment type="catalytic activity">
    <reaction evidence="1">
        <text>D-arabinose 5-phosphate + phosphoenolpyruvate + H2O = 3-deoxy-alpha-D-manno-2-octulosonate-8-phosphate + phosphate</text>
        <dbReference type="Rhea" id="RHEA:14053"/>
        <dbReference type="ChEBI" id="CHEBI:15377"/>
        <dbReference type="ChEBI" id="CHEBI:43474"/>
        <dbReference type="ChEBI" id="CHEBI:57693"/>
        <dbReference type="ChEBI" id="CHEBI:58702"/>
        <dbReference type="ChEBI" id="CHEBI:85985"/>
        <dbReference type="EC" id="2.5.1.55"/>
    </reaction>
</comment>
<comment type="pathway">
    <text evidence="1">Carbohydrate biosynthesis; 3-deoxy-D-manno-octulosonate biosynthesis; 3-deoxy-D-manno-octulosonate from D-ribulose 5-phosphate: step 2/3.</text>
</comment>
<comment type="pathway">
    <text evidence="1">Bacterial outer membrane biogenesis; lipopolysaccharide biosynthesis.</text>
</comment>
<comment type="subcellular location">
    <subcellularLocation>
        <location evidence="1">Cytoplasm</location>
    </subcellularLocation>
</comment>
<comment type="similarity">
    <text evidence="1">Belongs to the KdsA family.</text>
</comment>
<name>KDSA_PELPD</name>
<protein>
    <recommendedName>
        <fullName evidence="1">2-dehydro-3-deoxyphosphooctonate aldolase</fullName>
        <ecNumber evidence="1">2.5.1.55</ecNumber>
    </recommendedName>
    <alternativeName>
        <fullName evidence="1">3-deoxy-D-manno-octulosonic acid 8-phosphate synthase</fullName>
    </alternativeName>
    <alternativeName>
        <fullName evidence="1">KDO-8-phosphate synthase</fullName>
        <shortName evidence="1">KDO 8-P synthase</shortName>
        <shortName evidence="1">KDOPS</shortName>
    </alternativeName>
    <alternativeName>
        <fullName evidence="1">Phospho-2-dehydro-3-deoxyoctonate aldolase</fullName>
    </alternativeName>
</protein>
<proteinExistence type="inferred from homology"/>
<accession>A1APG0</accession>
<organism>
    <name type="scientific">Pelobacter propionicus (strain DSM 2379 / NBRC 103807 / OttBd1)</name>
    <dbReference type="NCBI Taxonomy" id="338966"/>
    <lineage>
        <taxon>Bacteria</taxon>
        <taxon>Pseudomonadati</taxon>
        <taxon>Thermodesulfobacteriota</taxon>
        <taxon>Desulfuromonadia</taxon>
        <taxon>Desulfuromonadales</taxon>
        <taxon>Desulfuromonadaceae</taxon>
        <taxon>Pelobacter</taxon>
    </lineage>
</organism>
<keyword id="KW-0963">Cytoplasm</keyword>
<keyword id="KW-0448">Lipopolysaccharide biosynthesis</keyword>
<keyword id="KW-1185">Reference proteome</keyword>
<keyword id="KW-0808">Transferase</keyword>
<gene>
    <name evidence="1" type="primary">kdsA</name>
    <name type="ordered locus">Ppro_1615</name>
</gene>
<feature type="chain" id="PRO_0000304466" description="2-dehydro-3-deoxyphosphooctonate aldolase">
    <location>
        <begin position="1"/>
        <end position="272"/>
    </location>
</feature>
<reference key="1">
    <citation type="submission" date="2006-10" db="EMBL/GenBank/DDBJ databases">
        <title>Complete sequence of chromosome of Pelobacter propionicus DSM 2379.</title>
        <authorList>
            <consortium name="US DOE Joint Genome Institute"/>
            <person name="Copeland A."/>
            <person name="Lucas S."/>
            <person name="Lapidus A."/>
            <person name="Barry K."/>
            <person name="Detter J.C."/>
            <person name="Glavina del Rio T."/>
            <person name="Hammon N."/>
            <person name="Israni S."/>
            <person name="Dalin E."/>
            <person name="Tice H."/>
            <person name="Pitluck S."/>
            <person name="Saunders E."/>
            <person name="Brettin T."/>
            <person name="Bruce D."/>
            <person name="Han C."/>
            <person name="Tapia R."/>
            <person name="Schmutz J."/>
            <person name="Larimer F."/>
            <person name="Land M."/>
            <person name="Hauser L."/>
            <person name="Kyrpides N."/>
            <person name="Kim E."/>
            <person name="Lovley D."/>
            <person name="Richardson P."/>
        </authorList>
    </citation>
    <scope>NUCLEOTIDE SEQUENCE [LARGE SCALE GENOMIC DNA]</scope>
    <source>
        <strain>DSM 2379 / NBRC 103807 / OttBd1</strain>
    </source>
</reference>
<evidence type="ECO:0000255" key="1">
    <source>
        <dbReference type="HAMAP-Rule" id="MF_00056"/>
    </source>
</evidence>
<sequence length="272" mass="28998">MTREIVIGGVKIGAKRPLALVAGPCVIESELATMRQAERLMTICNALSLPLIFKASYDKANRTSIGAYRGPGMREGLRILRKVKESLGLAVLSDVHSIEQVAPAAEVLDVLQIPAFLCRQTDLLIAAAATGRVINVKKGQFLAPWDMKNVAAKIASSGNENIILTERGASFGYNNLVVDMRSFPVMRASGYPVIFDATHSVQLPGGQGESSGGQREFVEFLSRAAVAAGVDGIFMEVHEEPEKALCDGPNSIALNDLPALLATLKAIDAVVK</sequence>
<dbReference type="EC" id="2.5.1.55" evidence="1"/>
<dbReference type="EMBL" id="CP000482">
    <property type="protein sequence ID" value="ABK99230.1"/>
    <property type="molecule type" value="Genomic_DNA"/>
</dbReference>
<dbReference type="RefSeq" id="WP_011735520.1">
    <property type="nucleotide sequence ID" value="NC_008609.1"/>
</dbReference>
<dbReference type="SMR" id="A1APG0"/>
<dbReference type="STRING" id="338966.Ppro_1615"/>
<dbReference type="KEGG" id="ppd:Ppro_1615"/>
<dbReference type="eggNOG" id="COG2877">
    <property type="taxonomic scope" value="Bacteria"/>
</dbReference>
<dbReference type="HOGENOM" id="CLU_036666_0_0_7"/>
<dbReference type="OrthoDB" id="9802281at2"/>
<dbReference type="UniPathway" id="UPA00030"/>
<dbReference type="UniPathway" id="UPA00357">
    <property type="reaction ID" value="UER00474"/>
</dbReference>
<dbReference type="Proteomes" id="UP000006732">
    <property type="component" value="Chromosome"/>
</dbReference>
<dbReference type="GO" id="GO:0005737">
    <property type="term" value="C:cytoplasm"/>
    <property type="evidence" value="ECO:0007669"/>
    <property type="project" value="UniProtKB-SubCell"/>
</dbReference>
<dbReference type="GO" id="GO:0008676">
    <property type="term" value="F:3-deoxy-8-phosphooctulonate synthase activity"/>
    <property type="evidence" value="ECO:0007669"/>
    <property type="project" value="UniProtKB-UniRule"/>
</dbReference>
<dbReference type="GO" id="GO:0019294">
    <property type="term" value="P:keto-3-deoxy-D-manno-octulosonic acid biosynthetic process"/>
    <property type="evidence" value="ECO:0007669"/>
    <property type="project" value="UniProtKB-UniRule"/>
</dbReference>
<dbReference type="Gene3D" id="3.20.20.70">
    <property type="entry name" value="Aldolase class I"/>
    <property type="match status" value="1"/>
</dbReference>
<dbReference type="HAMAP" id="MF_00056">
    <property type="entry name" value="KDO8P_synth"/>
    <property type="match status" value="1"/>
</dbReference>
<dbReference type="InterPro" id="IPR013785">
    <property type="entry name" value="Aldolase_TIM"/>
</dbReference>
<dbReference type="InterPro" id="IPR006218">
    <property type="entry name" value="DAHP1/KDSA"/>
</dbReference>
<dbReference type="InterPro" id="IPR006269">
    <property type="entry name" value="KDO8P_synthase"/>
</dbReference>
<dbReference type="NCBIfam" id="TIGR01362">
    <property type="entry name" value="KDO8P_synth"/>
    <property type="match status" value="1"/>
</dbReference>
<dbReference type="NCBIfam" id="NF003543">
    <property type="entry name" value="PRK05198.1"/>
    <property type="match status" value="1"/>
</dbReference>
<dbReference type="PANTHER" id="PTHR21057">
    <property type="entry name" value="PHOSPHO-2-DEHYDRO-3-DEOXYHEPTONATE ALDOLASE"/>
    <property type="match status" value="1"/>
</dbReference>
<dbReference type="Pfam" id="PF00793">
    <property type="entry name" value="DAHP_synth_1"/>
    <property type="match status" value="1"/>
</dbReference>
<dbReference type="SUPFAM" id="SSF51569">
    <property type="entry name" value="Aldolase"/>
    <property type="match status" value="1"/>
</dbReference>